<feature type="chain" id="PRO_1000119887" description="ATP-dependent dethiobiotin synthetase BioD">
    <location>
        <begin position="1"/>
        <end position="224"/>
    </location>
</feature>
<feature type="active site" evidence="1">
    <location>
        <position position="39"/>
    </location>
</feature>
<feature type="binding site" evidence="1">
    <location>
        <begin position="14"/>
        <end position="19"/>
    </location>
    <ligand>
        <name>ATP</name>
        <dbReference type="ChEBI" id="CHEBI:30616"/>
    </ligand>
</feature>
<feature type="binding site" evidence="1">
    <location>
        <position position="18"/>
    </location>
    <ligand>
        <name>Mg(2+)</name>
        <dbReference type="ChEBI" id="CHEBI:18420"/>
    </ligand>
</feature>
<feature type="binding site" evidence="1">
    <location>
        <position position="43"/>
    </location>
    <ligand>
        <name>substrate</name>
    </ligand>
</feature>
<feature type="binding site" evidence="1">
    <location>
        <position position="56"/>
    </location>
    <ligand>
        <name>ATP</name>
        <dbReference type="ChEBI" id="CHEBI:30616"/>
    </ligand>
</feature>
<feature type="binding site" evidence="1">
    <location>
        <position position="56"/>
    </location>
    <ligand>
        <name>Mg(2+)</name>
        <dbReference type="ChEBI" id="CHEBI:18420"/>
    </ligand>
</feature>
<feature type="binding site" evidence="1">
    <location>
        <begin position="117"/>
        <end position="120"/>
    </location>
    <ligand>
        <name>ATP</name>
        <dbReference type="ChEBI" id="CHEBI:30616"/>
    </ligand>
</feature>
<feature type="binding site" evidence="1">
    <location>
        <position position="117"/>
    </location>
    <ligand>
        <name>Mg(2+)</name>
        <dbReference type="ChEBI" id="CHEBI:18420"/>
    </ligand>
</feature>
<feature type="binding site" evidence="1">
    <location>
        <begin position="177"/>
        <end position="178"/>
    </location>
    <ligand>
        <name>ATP</name>
        <dbReference type="ChEBI" id="CHEBI:30616"/>
    </ligand>
</feature>
<gene>
    <name evidence="1" type="primary">bioD</name>
    <name type="ordered locus">xcc-b100_3763</name>
</gene>
<protein>
    <recommendedName>
        <fullName evidence="1">ATP-dependent dethiobiotin synthetase BioD</fullName>
        <ecNumber evidence="1">6.3.3.3</ecNumber>
    </recommendedName>
    <alternativeName>
        <fullName evidence="1">DTB synthetase</fullName>
        <shortName evidence="1">DTBS</shortName>
    </alternativeName>
    <alternativeName>
        <fullName evidence="1">Dethiobiotin synthase</fullName>
    </alternativeName>
</protein>
<accession>B0RVN9</accession>
<reference key="1">
    <citation type="journal article" date="2008" name="J. Biotechnol.">
        <title>The genome of Xanthomonas campestris pv. campestris B100 and its use for the reconstruction of metabolic pathways involved in xanthan biosynthesis.</title>
        <authorList>
            <person name="Vorhoelter F.-J."/>
            <person name="Schneiker S."/>
            <person name="Goesmann A."/>
            <person name="Krause L."/>
            <person name="Bekel T."/>
            <person name="Kaiser O."/>
            <person name="Linke B."/>
            <person name="Patschkowski T."/>
            <person name="Rueckert C."/>
            <person name="Schmid J."/>
            <person name="Sidhu V.K."/>
            <person name="Sieber V."/>
            <person name="Tauch A."/>
            <person name="Watt S.A."/>
            <person name="Weisshaar B."/>
            <person name="Becker A."/>
            <person name="Niehaus K."/>
            <person name="Puehler A."/>
        </authorList>
    </citation>
    <scope>NUCLEOTIDE SEQUENCE [LARGE SCALE GENOMIC DNA]</scope>
    <source>
        <strain>B100</strain>
    </source>
</reference>
<sequence>MQFPAFYVTGTDTGIGKTVASTALLHAVRARGHTAVGMKPVASGCVATPQGWHNEDALALQAASQPQPDYATLNPYALPAALAPELAAADVGVSLSLVPLQLAFAQLRAQAEVVVVEGVGGWAAPLSAQLDQADLVRTLQLPVVLVVGVRLGCINHARLTAAAIAADGLRCIGWIANEIDPQMERIEDNIRMLGQRLAMPCWGRIPWRPNAQAEGLAQHIRLPE</sequence>
<name>BIOD_XANCB</name>
<organism>
    <name type="scientific">Xanthomonas campestris pv. campestris (strain B100)</name>
    <dbReference type="NCBI Taxonomy" id="509169"/>
    <lineage>
        <taxon>Bacteria</taxon>
        <taxon>Pseudomonadati</taxon>
        <taxon>Pseudomonadota</taxon>
        <taxon>Gammaproteobacteria</taxon>
        <taxon>Lysobacterales</taxon>
        <taxon>Lysobacteraceae</taxon>
        <taxon>Xanthomonas</taxon>
    </lineage>
</organism>
<keyword id="KW-0067">ATP-binding</keyword>
<keyword id="KW-0093">Biotin biosynthesis</keyword>
<keyword id="KW-0963">Cytoplasm</keyword>
<keyword id="KW-0436">Ligase</keyword>
<keyword id="KW-0460">Magnesium</keyword>
<keyword id="KW-0479">Metal-binding</keyword>
<keyword id="KW-0547">Nucleotide-binding</keyword>
<proteinExistence type="inferred from homology"/>
<evidence type="ECO:0000255" key="1">
    <source>
        <dbReference type="HAMAP-Rule" id="MF_00336"/>
    </source>
</evidence>
<dbReference type="EC" id="6.3.3.3" evidence="1"/>
<dbReference type="EMBL" id="AM920689">
    <property type="protein sequence ID" value="CAP53130.1"/>
    <property type="molecule type" value="Genomic_DNA"/>
</dbReference>
<dbReference type="SMR" id="B0RVN9"/>
<dbReference type="KEGG" id="xca:xcc-b100_3763"/>
<dbReference type="HOGENOM" id="CLU_072551_0_0_6"/>
<dbReference type="UniPathway" id="UPA00078">
    <property type="reaction ID" value="UER00161"/>
</dbReference>
<dbReference type="Proteomes" id="UP000001188">
    <property type="component" value="Chromosome"/>
</dbReference>
<dbReference type="GO" id="GO:0005829">
    <property type="term" value="C:cytosol"/>
    <property type="evidence" value="ECO:0007669"/>
    <property type="project" value="TreeGrafter"/>
</dbReference>
<dbReference type="GO" id="GO:0005524">
    <property type="term" value="F:ATP binding"/>
    <property type="evidence" value="ECO:0007669"/>
    <property type="project" value="UniProtKB-UniRule"/>
</dbReference>
<dbReference type="GO" id="GO:0004141">
    <property type="term" value="F:dethiobiotin synthase activity"/>
    <property type="evidence" value="ECO:0007669"/>
    <property type="project" value="UniProtKB-UniRule"/>
</dbReference>
<dbReference type="GO" id="GO:0000287">
    <property type="term" value="F:magnesium ion binding"/>
    <property type="evidence" value="ECO:0007669"/>
    <property type="project" value="UniProtKB-UniRule"/>
</dbReference>
<dbReference type="GO" id="GO:0009102">
    <property type="term" value="P:biotin biosynthetic process"/>
    <property type="evidence" value="ECO:0007669"/>
    <property type="project" value="UniProtKB-UniRule"/>
</dbReference>
<dbReference type="CDD" id="cd03109">
    <property type="entry name" value="DTBS"/>
    <property type="match status" value="1"/>
</dbReference>
<dbReference type="FunFam" id="3.40.50.300:FF:000292">
    <property type="entry name" value="ATP-dependent dethiobiotin synthetase BioD"/>
    <property type="match status" value="1"/>
</dbReference>
<dbReference type="Gene3D" id="3.40.50.300">
    <property type="entry name" value="P-loop containing nucleotide triphosphate hydrolases"/>
    <property type="match status" value="1"/>
</dbReference>
<dbReference type="HAMAP" id="MF_00336">
    <property type="entry name" value="BioD"/>
    <property type="match status" value="1"/>
</dbReference>
<dbReference type="InterPro" id="IPR004472">
    <property type="entry name" value="DTB_synth_BioD"/>
</dbReference>
<dbReference type="InterPro" id="IPR027417">
    <property type="entry name" value="P-loop_NTPase"/>
</dbReference>
<dbReference type="NCBIfam" id="TIGR00347">
    <property type="entry name" value="bioD"/>
    <property type="match status" value="1"/>
</dbReference>
<dbReference type="PANTHER" id="PTHR43210">
    <property type="entry name" value="DETHIOBIOTIN SYNTHETASE"/>
    <property type="match status" value="1"/>
</dbReference>
<dbReference type="PANTHER" id="PTHR43210:SF5">
    <property type="entry name" value="DETHIOBIOTIN SYNTHETASE"/>
    <property type="match status" value="1"/>
</dbReference>
<dbReference type="Pfam" id="PF13500">
    <property type="entry name" value="AAA_26"/>
    <property type="match status" value="1"/>
</dbReference>
<dbReference type="PIRSF" id="PIRSF006755">
    <property type="entry name" value="DTB_synth"/>
    <property type="match status" value="1"/>
</dbReference>
<dbReference type="SUPFAM" id="SSF52540">
    <property type="entry name" value="P-loop containing nucleoside triphosphate hydrolases"/>
    <property type="match status" value="1"/>
</dbReference>
<comment type="function">
    <text evidence="1">Catalyzes a mechanistically unusual reaction, the ATP-dependent insertion of CO2 between the N7 and N8 nitrogen atoms of 7,8-diaminopelargonic acid (DAPA, also called 7,8-diammoniononanoate) to form a ureido ring.</text>
</comment>
<comment type="catalytic activity">
    <reaction evidence="1">
        <text>(7R,8S)-7,8-diammoniononanoate + CO2 + ATP = (4R,5S)-dethiobiotin + ADP + phosphate + 3 H(+)</text>
        <dbReference type="Rhea" id="RHEA:15805"/>
        <dbReference type="ChEBI" id="CHEBI:15378"/>
        <dbReference type="ChEBI" id="CHEBI:16526"/>
        <dbReference type="ChEBI" id="CHEBI:30616"/>
        <dbReference type="ChEBI" id="CHEBI:43474"/>
        <dbReference type="ChEBI" id="CHEBI:149469"/>
        <dbReference type="ChEBI" id="CHEBI:149473"/>
        <dbReference type="ChEBI" id="CHEBI:456216"/>
        <dbReference type="EC" id="6.3.3.3"/>
    </reaction>
</comment>
<comment type="cofactor">
    <cofactor evidence="1">
        <name>Mg(2+)</name>
        <dbReference type="ChEBI" id="CHEBI:18420"/>
    </cofactor>
</comment>
<comment type="pathway">
    <text evidence="1">Cofactor biosynthesis; biotin biosynthesis; biotin from 7,8-diaminononanoate: step 1/2.</text>
</comment>
<comment type="subunit">
    <text evidence="1">Homodimer.</text>
</comment>
<comment type="subcellular location">
    <subcellularLocation>
        <location evidence="1">Cytoplasm</location>
    </subcellularLocation>
</comment>
<comment type="similarity">
    <text evidence="1">Belongs to the dethiobiotin synthetase family.</text>
</comment>